<feature type="chain" id="PRO_0000163631" description="1-deoxy-D-xylulose 5-phosphate reductoisomerase">
    <location>
        <begin position="1"/>
        <end position="379"/>
    </location>
</feature>
<feature type="binding site" evidence="1">
    <location>
        <position position="10"/>
    </location>
    <ligand>
        <name>NADPH</name>
        <dbReference type="ChEBI" id="CHEBI:57783"/>
    </ligand>
</feature>
<feature type="binding site" evidence="1">
    <location>
        <position position="11"/>
    </location>
    <ligand>
        <name>NADPH</name>
        <dbReference type="ChEBI" id="CHEBI:57783"/>
    </ligand>
</feature>
<feature type="binding site" evidence="1">
    <location>
        <position position="12"/>
    </location>
    <ligand>
        <name>NADPH</name>
        <dbReference type="ChEBI" id="CHEBI:57783"/>
    </ligand>
</feature>
<feature type="binding site" evidence="1">
    <location>
        <position position="13"/>
    </location>
    <ligand>
        <name>NADPH</name>
        <dbReference type="ChEBI" id="CHEBI:57783"/>
    </ligand>
</feature>
<feature type="binding site" evidence="1">
    <location>
        <position position="38"/>
    </location>
    <ligand>
        <name>NADPH</name>
        <dbReference type="ChEBI" id="CHEBI:57783"/>
    </ligand>
</feature>
<feature type="binding site" evidence="1">
    <location>
        <position position="39"/>
    </location>
    <ligand>
        <name>NADPH</name>
        <dbReference type="ChEBI" id="CHEBI:57783"/>
    </ligand>
</feature>
<feature type="binding site" evidence="1">
    <location>
        <position position="121"/>
    </location>
    <ligand>
        <name>NADPH</name>
        <dbReference type="ChEBI" id="CHEBI:57783"/>
    </ligand>
</feature>
<feature type="binding site" evidence="1">
    <location>
        <position position="122"/>
    </location>
    <ligand>
        <name>1-deoxy-D-xylulose 5-phosphate</name>
        <dbReference type="ChEBI" id="CHEBI:57792"/>
    </ligand>
</feature>
<feature type="binding site" evidence="1">
    <location>
        <position position="123"/>
    </location>
    <ligand>
        <name>NADPH</name>
        <dbReference type="ChEBI" id="CHEBI:57783"/>
    </ligand>
</feature>
<feature type="binding site" evidence="1">
    <location>
        <position position="147"/>
    </location>
    <ligand>
        <name>Mn(2+)</name>
        <dbReference type="ChEBI" id="CHEBI:29035"/>
    </ligand>
</feature>
<feature type="binding site" evidence="1">
    <location>
        <position position="148"/>
    </location>
    <ligand>
        <name>1-deoxy-D-xylulose 5-phosphate</name>
        <dbReference type="ChEBI" id="CHEBI:57792"/>
    </ligand>
</feature>
<feature type="binding site" evidence="1">
    <location>
        <position position="149"/>
    </location>
    <ligand>
        <name>1-deoxy-D-xylulose 5-phosphate</name>
        <dbReference type="ChEBI" id="CHEBI:57792"/>
    </ligand>
</feature>
<feature type="binding site" evidence="1">
    <location>
        <position position="149"/>
    </location>
    <ligand>
        <name>Mn(2+)</name>
        <dbReference type="ChEBI" id="CHEBI:29035"/>
    </ligand>
</feature>
<feature type="binding site" evidence="1">
    <location>
        <position position="173"/>
    </location>
    <ligand>
        <name>1-deoxy-D-xylulose 5-phosphate</name>
        <dbReference type="ChEBI" id="CHEBI:57792"/>
    </ligand>
</feature>
<feature type="binding site" evidence="1">
    <location>
        <position position="196"/>
    </location>
    <ligand>
        <name>1-deoxy-D-xylulose 5-phosphate</name>
        <dbReference type="ChEBI" id="CHEBI:57792"/>
    </ligand>
</feature>
<feature type="binding site" evidence="1">
    <location>
        <position position="202"/>
    </location>
    <ligand>
        <name>NADPH</name>
        <dbReference type="ChEBI" id="CHEBI:57783"/>
    </ligand>
</feature>
<feature type="binding site" evidence="1">
    <location>
        <position position="209"/>
    </location>
    <ligand>
        <name>1-deoxy-D-xylulose 5-phosphate</name>
        <dbReference type="ChEBI" id="CHEBI:57792"/>
    </ligand>
</feature>
<feature type="binding site" evidence="1">
    <location>
        <position position="214"/>
    </location>
    <ligand>
        <name>1-deoxy-D-xylulose 5-phosphate</name>
        <dbReference type="ChEBI" id="CHEBI:57792"/>
    </ligand>
</feature>
<feature type="binding site" evidence="1">
    <location>
        <position position="215"/>
    </location>
    <ligand>
        <name>1-deoxy-D-xylulose 5-phosphate</name>
        <dbReference type="ChEBI" id="CHEBI:57792"/>
    </ligand>
</feature>
<feature type="binding site" evidence="1">
    <location>
        <position position="218"/>
    </location>
    <ligand>
        <name>1-deoxy-D-xylulose 5-phosphate</name>
        <dbReference type="ChEBI" id="CHEBI:57792"/>
    </ligand>
</feature>
<feature type="binding site" evidence="1">
    <location>
        <position position="218"/>
    </location>
    <ligand>
        <name>Mn(2+)</name>
        <dbReference type="ChEBI" id="CHEBI:29035"/>
    </ligand>
</feature>
<name>DXR_CHLTR</name>
<sequence length="379" mass="41762">MKHLALIGSTGSIGRQVLQVVRSIPDTFIIETLAAYGRNQEALISQIREFNPRVVAVREETTYKELRKLFPHIEILLGEEGLVSVATEPSVTMTIVASSGIDALPAVIAAIRQKKTIALANKESLVAAGELVTTLARENGVQILPIDSEHNALFQCLEGRDSSTIKKLLLTASGGPLRNKSKEELQKVSLQEVLRHPVWNMGPKITVDSSTLVNKGLEIIEAFWLFGLEAVEIEAVIHPQSLVHGMVEFCDGTILSVMNPPSMLFPIQHVLTFPERSPAIGPGFDFLSNRTLEFFPIDEDRFPSVHLAKRVLLEKGSMGCFFNGANEALVHRFLAGEISWHQIVPKLQALVDQHRVQSCLSLEEILSVDAEARARAQEC</sequence>
<organism>
    <name type="scientific">Chlamydia trachomatis serovar D (strain ATCC VR-885 / DSM 19411 / UW-3/Cx)</name>
    <dbReference type="NCBI Taxonomy" id="272561"/>
    <lineage>
        <taxon>Bacteria</taxon>
        <taxon>Pseudomonadati</taxon>
        <taxon>Chlamydiota</taxon>
        <taxon>Chlamydiia</taxon>
        <taxon>Chlamydiales</taxon>
        <taxon>Chlamydiaceae</taxon>
        <taxon>Chlamydia/Chlamydophila group</taxon>
        <taxon>Chlamydia</taxon>
    </lineage>
</organism>
<reference key="1">
    <citation type="journal article" date="1998" name="Science">
        <title>Genome sequence of an obligate intracellular pathogen of humans: Chlamydia trachomatis.</title>
        <authorList>
            <person name="Stephens R.S."/>
            <person name="Kalman S."/>
            <person name="Lammel C.J."/>
            <person name="Fan J."/>
            <person name="Marathe R."/>
            <person name="Aravind L."/>
            <person name="Mitchell W.P."/>
            <person name="Olinger L."/>
            <person name="Tatusov R.L."/>
            <person name="Zhao Q."/>
            <person name="Koonin E.V."/>
            <person name="Davis R.W."/>
        </authorList>
    </citation>
    <scope>NUCLEOTIDE SEQUENCE [LARGE SCALE GENOMIC DNA]</scope>
    <source>
        <strain>ATCC VR-885 / DSM 19411 / UW-3/Cx</strain>
    </source>
</reference>
<protein>
    <recommendedName>
        <fullName evidence="1">1-deoxy-D-xylulose 5-phosphate reductoisomerase</fullName>
        <shortName evidence="1">DXP reductoisomerase</shortName>
        <ecNumber evidence="1">1.1.1.267</ecNumber>
    </recommendedName>
    <alternativeName>
        <fullName evidence="1">1-deoxyxylulose-5-phosphate reductoisomerase</fullName>
    </alternativeName>
    <alternativeName>
        <fullName evidence="1">2-C-methyl-D-erythritol 4-phosphate synthase</fullName>
    </alternativeName>
</protein>
<keyword id="KW-0414">Isoprene biosynthesis</keyword>
<keyword id="KW-0464">Manganese</keyword>
<keyword id="KW-0479">Metal-binding</keyword>
<keyword id="KW-0521">NADP</keyword>
<keyword id="KW-0560">Oxidoreductase</keyword>
<keyword id="KW-1185">Reference proteome</keyword>
<dbReference type="EC" id="1.1.1.267" evidence="1"/>
<dbReference type="EMBL" id="AE001273">
    <property type="protein sequence ID" value="AAC67662.1"/>
    <property type="molecule type" value="Genomic_DNA"/>
</dbReference>
<dbReference type="PIR" id="A71562">
    <property type="entry name" value="A71562"/>
</dbReference>
<dbReference type="RefSeq" id="WP_009871420.1">
    <property type="nucleotide sequence ID" value="NC_000117.1"/>
</dbReference>
<dbReference type="SMR" id="O84074"/>
<dbReference type="FunCoup" id="O84074">
    <property type="interactions" value="269"/>
</dbReference>
<dbReference type="STRING" id="272561.CT_071"/>
<dbReference type="EnsemblBacteria" id="AAC67662">
    <property type="protein sequence ID" value="AAC67662"/>
    <property type="gene ID" value="CT_071"/>
</dbReference>
<dbReference type="KEGG" id="ctr:CT_071"/>
<dbReference type="PATRIC" id="fig|272561.5.peg.80"/>
<dbReference type="HOGENOM" id="CLU_035714_4_0_0"/>
<dbReference type="InParanoid" id="O84074"/>
<dbReference type="OrthoDB" id="9806546at2"/>
<dbReference type="UniPathway" id="UPA00056">
    <property type="reaction ID" value="UER00092"/>
</dbReference>
<dbReference type="Proteomes" id="UP000000431">
    <property type="component" value="Chromosome"/>
</dbReference>
<dbReference type="GO" id="GO:0030604">
    <property type="term" value="F:1-deoxy-D-xylulose-5-phosphate reductoisomerase activity"/>
    <property type="evidence" value="ECO:0000318"/>
    <property type="project" value="GO_Central"/>
</dbReference>
<dbReference type="GO" id="GO:0030145">
    <property type="term" value="F:manganese ion binding"/>
    <property type="evidence" value="ECO:0000318"/>
    <property type="project" value="GO_Central"/>
</dbReference>
<dbReference type="GO" id="GO:0070402">
    <property type="term" value="F:NADPH binding"/>
    <property type="evidence" value="ECO:0000318"/>
    <property type="project" value="GO_Central"/>
</dbReference>
<dbReference type="GO" id="GO:0051484">
    <property type="term" value="P:isopentenyl diphosphate biosynthetic process, methylerythritol 4-phosphate pathway involved in terpenoid biosynthetic process"/>
    <property type="evidence" value="ECO:0000318"/>
    <property type="project" value="GO_Central"/>
</dbReference>
<dbReference type="FunFam" id="3.40.50.720:FF:000045">
    <property type="entry name" value="1-deoxy-D-xylulose 5-phosphate reductoisomerase"/>
    <property type="match status" value="1"/>
</dbReference>
<dbReference type="Gene3D" id="1.10.1740.10">
    <property type="match status" value="1"/>
</dbReference>
<dbReference type="Gene3D" id="3.40.50.720">
    <property type="entry name" value="NAD(P)-binding Rossmann-like Domain"/>
    <property type="match status" value="1"/>
</dbReference>
<dbReference type="HAMAP" id="MF_00183">
    <property type="entry name" value="DXP_reductoisom"/>
    <property type="match status" value="1"/>
</dbReference>
<dbReference type="InterPro" id="IPR003821">
    <property type="entry name" value="DXP_reductoisomerase"/>
</dbReference>
<dbReference type="InterPro" id="IPR013644">
    <property type="entry name" value="DXP_reductoisomerase_C"/>
</dbReference>
<dbReference type="InterPro" id="IPR013512">
    <property type="entry name" value="DXP_reductoisomerase_N"/>
</dbReference>
<dbReference type="InterPro" id="IPR026877">
    <property type="entry name" value="DXPR_C"/>
</dbReference>
<dbReference type="InterPro" id="IPR036169">
    <property type="entry name" value="DXPR_C_sf"/>
</dbReference>
<dbReference type="InterPro" id="IPR036291">
    <property type="entry name" value="NAD(P)-bd_dom_sf"/>
</dbReference>
<dbReference type="NCBIfam" id="TIGR00243">
    <property type="entry name" value="Dxr"/>
    <property type="match status" value="1"/>
</dbReference>
<dbReference type="PANTHER" id="PTHR30525">
    <property type="entry name" value="1-DEOXY-D-XYLULOSE 5-PHOSPHATE REDUCTOISOMERASE"/>
    <property type="match status" value="1"/>
</dbReference>
<dbReference type="PANTHER" id="PTHR30525:SF0">
    <property type="entry name" value="1-DEOXY-D-XYLULOSE 5-PHOSPHATE REDUCTOISOMERASE, CHLOROPLASTIC"/>
    <property type="match status" value="1"/>
</dbReference>
<dbReference type="Pfam" id="PF08436">
    <property type="entry name" value="DXP_redisom_C"/>
    <property type="match status" value="1"/>
</dbReference>
<dbReference type="Pfam" id="PF02670">
    <property type="entry name" value="DXP_reductoisom"/>
    <property type="match status" value="1"/>
</dbReference>
<dbReference type="Pfam" id="PF13288">
    <property type="entry name" value="DXPR_C"/>
    <property type="match status" value="1"/>
</dbReference>
<dbReference type="PIRSF" id="PIRSF006205">
    <property type="entry name" value="Dxp_reductismrs"/>
    <property type="match status" value="1"/>
</dbReference>
<dbReference type="SUPFAM" id="SSF69055">
    <property type="entry name" value="1-deoxy-D-xylulose-5-phosphate reductoisomerase, C-terminal domain"/>
    <property type="match status" value="1"/>
</dbReference>
<dbReference type="SUPFAM" id="SSF55347">
    <property type="entry name" value="Glyceraldehyde-3-phosphate dehydrogenase-like, C-terminal domain"/>
    <property type="match status" value="1"/>
</dbReference>
<dbReference type="SUPFAM" id="SSF51735">
    <property type="entry name" value="NAD(P)-binding Rossmann-fold domains"/>
    <property type="match status" value="1"/>
</dbReference>
<evidence type="ECO:0000255" key="1">
    <source>
        <dbReference type="HAMAP-Rule" id="MF_00183"/>
    </source>
</evidence>
<accession>O84074</accession>
<comment type="function">
    <text evidence="1">Catalyzes the NADPH-dependent rearrangement and reduction of 1-deoxy-D-xylulose-5-phosphate (DXP) to 2-C-methyl-D-erythritol 4-phosphate (MEP).</text>
</comment>
<comment type="catalytic activity">
    <reaction evidence="1">
        <text>2-C-methyl-D-erythritol 4-phosphate + NADP(+) = 1-deoxy-D-xylulose 5-phosphate + NADPH + H(+)</text>
        <dbReference type="Rhea" id="RHEA:13717"/>
        <dbReference type="ChEBI" id="CHEBI:15378"/>
        <dbReference type="ChEBI" id="CHEBI:57783"/>
        <dbReference type="ChEBI" id="CHEBI:57792"/>
        <dbReference type="ChEBI" id="CHEBI:58262"/>
        <dbReference type="ChEBI" id="CHEBI:58349"/>
        <dbReference type="EC" id="1.1.1.267"/>
    </reaction>
    <physiologicalReaction direction="right-to-left" evidence="1">
        <dbReference type="Rhea" id="RHEA:13719"/>
    </physiologicalReaction>
</comment>
<comment type="cofactor">
    <cofactor evidence="1">
        <name>Mg(2+)</name>
        <dbReference type="ChEBI" id="CHEBI:18420"/>
    </cofactor>
    <cofactor evidence="1">
        <name>Mn(2+)</name>
        <dbReference type="ChEBI" id="CHEBI:29035"/>
    </cofactor>
</comment>
<comment type="pathway">
    <text evidence="1">Isoprenoid biosynthesis; isopentenyl diphosphate biosynthesis via DXP pathway; isopentenyl diphosphate from 1-deoxy-D-xylulose 5-phosphate: step 1/6.</text>
</comment>
<comment type="similarity">
    <text evidence="1">Belongs to the DXR family.</text>
</comment>
<gene>
    <name evidence="1" type="primary">dxr</name>
    <name type="ordered locus">CT_071</name>
</gene>
<proteinExistence type="inferred from homology"/>